<comment type="function">
    <text evidence="1">Component of the 26S proteasome, a multiprotein complex involved in the ATP-dependent degradation of ubiquitinated proteins. This complex plays a key role in the maintenance of protein homeostasis by removing misfolded or damaged proteins, which could impair cellular functions, and by removing proteins whose functions are no longer required. Therefore, the proteasome participates in numerous cellular processes, including cell cycle progression, apoptosis, or DNA damage repair. PSMC5 belongs to the heterohexameric ring of AAA (ATPases associated with diverse cellular activities) proteins that unfolds ubiquitinated target proteins that are concurrently translocated into a proteolytic chamber and degraded into peptides.</text>
</comment>
<comment type="subunit">
    <text evidence="1 4 5">Component of the 19S proteasome regulatory particle complex. The 26S proteasome consists of a 20S core particle (CP) and two 19S regulatory subunits (RP) (By similarity). The regulatory particle is made of a lid composed of 9 subunits, a base containing 6 ATPases including PSMC5 and few additional components (By similarity). Component of a complex with USP49 and RUVBL1 (By similarity). Interacts with PRPF19 (PubMed:17349974). Interacts with TRIM5 (By similarity). Interacts with NDC80 (By similarity). Interacts with PAAF1 (By similarity). Interacts, in vitro, with the thyroid hormone receptor (in a thyroid hormone T3-dependent manner) and with retinoid X receptor (RXR) (PubMed:8598193). Interacts with ERCC6 (By similarity).</text>
</comment>
<comment type="interaction">
    <interactant intactId="EBI-357713">
        <id>P62196</id>
    </interactant>
    <interactant intactId="EBI-1183307">
        <id>P19447</id>
        <label>ERCC3</label>
    </interactant>
    <organismsDiffer>true</organismsDiffer>
    <experiments>6</experiments>
</comment>
<comment type="subcellular location">
    <subcellularLocation>
        <location evidence="1">Cytoplasm</location>
    </subcellularLocation>
    <subcellularLocation>
        <location evidence="1">Nucleus</location>
    </subcellularLocation>
</comment>
<comment type="similarity">
    <text evidence="6">Belongs to the AAA ATPase family.</text>
</comment>
<proteinExistence type="evidence at protein level"/>
<accession>P62196</accession>
<accession>O35051</accession>
<accession>P47210</accession>
<accession>P52915</accession>
<accession>P52916</accession>
<accession>Q3UL51</accession>
<accession>Q9CWN5</accession>
<evidence type="ECO:0000250" key="1">
    <source>
        <dbReference type="UniProtKB" id="P62195"/>
    </source>
</evidence>
<evidence type="ECO:0000255" key="2"/>
<evidence type="ECO:0000269" key="3">
    <source>
    </source>
</evidence>
<evidence type="ECO:0000269" key="4">
    <source>
    </source>
</evidence>
<evidence type="ECO:0000269" key="5">
    <source>
    </source>
</evidence>
<evidence type="ECO:0000305" key="6"/>
<evidence type="ECO:0000305" key="7">
    <source>
    </source>
</evidence>
<dbReference type="EMBL" id="Z54219">
    <property type="protein sequence ID" value="CAA90961.1"/>
    <property type="molecule type" value="mRNA"/>
</dbReference>
<dbReference type="EMBL" id="AK010505">
    <property type="protein sequence ID" value="BAB26990.1"/>
    <property type="molecule type" value="mRNA"/>
</dbReference>
<dbReference type="EMBL" id="AK135451">
    <property type="protein sequence ID" value="BAE22539.1"/>
    <property type="molecule type" value="mRNA"/>
</dbReference>
<dbReference type="EMBL" id="AK145703">
    <property type="protein sequence ID" value="BAE26599.1"/>
    <property type="molecule type" value="mRNA"/>
</dbReference>
<dbReference type="CCDS" id="CCDS25553.1"/>
<dbReference type="PIR" id="S61923">
    <property type="entry name" value="S61923"/>
</dbReference>
<dbReference type="RefSeq" id="NP_032976.1">
    <property type="nucleotide sequence ID" value="NM_008950.1"/>
</dbReference>
<dbReference type="SMR" id="P62196"/>
<dbReference type="BioGRID" id="202430">
    <property type="interactions" value="65"/>
</dbReference>
<dbReference type="DIP" id="DIP-35174N"/>
<dbReference type="FunCoup" id="P62196">
    <property type="interactions" value="2686"/>
</dbReference>
<dbReference type="IntAct" id="P62196">
    <property type="interactions" value="10"/>
</dbReference>
<dbReference type="MINT" id="P62196"/>
<dbReference type="STRING" id="10090.ENSMUSP00000021049"/>
<dbReference type="GlyGen" id="P62196">
    <property type="glycosylation" value="4 sites, 1 N-linked glycan (1 site), 1 O-linked glycan (2 sites)"/>
</dbReference>
<dbReference type="iPTMnet" id="P62196"/>
<dbReference type="MetOSite" id="P62196"/>
<dbReference type="PhosphoSitePlus" id="P62196"/>
<dbReference type="SwissPalm" id="P62196"/>
<dbReference type="REPRODUCTION-2DPAGE" id="IPI00135640"/>
<dbReference type="REPRODUCTION-2DPAGE" id="P62196"/>
<dbReference type="CPTAC" id="non-CPTAC-3857"/>
<dbReference type="jPOST" id="P62196"/>
<dbReference type="PaxDb" id="10090-ENSMUSP00000021049"/>
<dbReference type="PeptideAtlas" id="P62196"/>
<dbReference type="ProteomicsDB" id="291682"/>
<dbReference type="Pumba" id="P62196"/>
<dbReference type="Antibodypedia" id="18742">
    <property type="antibodies" value="317 antibodies from 36 providers"/>
</dbReference>
<dbReference type="DNASU" id="19184"/>
<dbReference type="Ensembl" id="ENSMUST00000021049.9">
    <property type="protein sequence ID" value="ENSMUSP00000021049.3"/>
    <property type="gene ID" value="ENSMUSG00000020708.13"/>
</dbReference>
<dbReference type="GeneID" id="19184"/>
<dbReference type="KEGG" id="mmu:19184"/>
<dbReference type="UCSC" id="uc007lyn.1">
    <property type="organism name" value="mouse"/>
</dbReference>
<dbReference type="AGR" id="MGI:105047"/>
<dbReference type="CTD" id="5705"/>
<dbReference type="MGI" id="MGI:105047">
    <property type="gene designation" value="Psmc5"/>
</dbReference>
<dbReference type="VEuPathDB" id="HostDB:ENSMUSG00000020708"/>
<dbReference type="eggNOG" id="KOG0728">
    <property type="taxonomic scope" value="Eukaryota"/>
</dbReference>
<dbReference type="GeneTree" id="ENSGT01020000230346"/>
<dbReference type="HOGENOM" id="CLU_000688_2_0_1"/>
<dbReference type="InParanoid" id="P62196"/>
<dbReference type="OMA" id="REPAVIF"/>
<dbReference type="OrthoDB" id="1154031at2759"/>
<dbReference type="PhylomeDB" id="P62196"/>
<dbReference type="BRENDA" id="5.6.1.5">
    <property type="organism ID" value="3474"/>
</dbReference>
<dbReference type="Reactome" id="R-MMU-1169091">
    <property type="pathway name" value="Activation of NF-kappaB in B cells"/>
</dbReference>
<dbReference type="Reactome" id="R-MMU-1234176">
    <property type="pathway name" value="Oxygen-dependent proline hydroxylation of Hypoxia-inducible Factor Alpha"/>
</dbReference>
<dbReference type="Reactome" id="R-MMU-1236978">
    <property type="pathway name" value="Cross-presentation of soluble exogenous antigens (endosomes)"/>
</dbReference>
<dbReference type="Reactome" id="R-MMU-174084">
    <property type="pathway name" value="Autodegradation of Cdh1 by Cdh1:APC/C"/>
</dbReference>
<dbReference type="Reactome" id="R-MMU-174154">
    <property type="pathway name" value="APC/C:Cdc20 mediated degradation of Securin"/>
</dbReference>
<dbReference type="Reactome" id="R-MMU-174178">
    <property type="pathway name" value="APC/C:Cdh1 mediated degradation of Cdc20 and other APC/C:Cdh1 targeted proteins in late mitosis/early G1"/>
</dbReference>
<dbReference type="Reactome" id="R-MMU-174184">
    <property type="pathway name" value="Cdc20:Phospho-APC/C mediated degradation of Cyclin A"/>
</dbReference>
<dbReference type="Reactome" id="R-MMU-187577">
    <property type="pathway name" value="SCF(Skp2)-mediated degradation of p27/p21"/>
</dbReference>
<dbReference type="Reactome" id="R-MMU-195253">
    <property type="pathway name" value="Degradation of beta-catenin by the destruction complex"/>
</dbReference>
<dbReference type="Reactome" id="R-MMU-202424">
    <property type="pathway name" value="Downstream TCR signaling"/>
</dbReference>
<dbReference type="Reactome" id="R-MMU-2467813">
    <property type="pathway name" value="Separation of Sister Chromatids"/>
</dbReference>
<dbReference type="Reactome" id="R-MMU-2871837">
    <property type="pathway name" value="FCERI mediated NF-kB activation"/>
</dbReference>
<dbReference type="Reactome" id="R-MMU-349425">
    <property type="pathway name" value="Autodegradation of the E3 ubiquitin ligase COP1"/>
</dbReference>
<dbReference type="Reactome" id="R-MMU-350562">
    <property type="pathway name" value="Regulation of ornithine decarboxylase (ODC)"/>
</dbReference>
<dbReference type="Reactome" id="R-MMU-382556">
    <property type="pathway name" value="ABC-family proteins mediated transport"/>
</dbReference>
<dbReference type="Reactome" id="R-MMU-450408">
    <property type="pathway name" value="AUF1 (hnRNP D0) binds and destabilizes mRNA"/>
</dbReference>
<dbReference type="Reactome" id="R-MMU-4608870">
    <property type="pathway name" value="Asymmetric localization of PCP proteins"/>
</dbReference>
<dbReference type="Reactome" id="R-MMU-4641257">
    <property type="pathway name" value="Degradation of AXIN"/>
</dbReference>
<dbReference type="Reactome" id="R-MMU-4641258">
    <property type="pathway name" value="Degradation of DVL"/>
</dbReference>
<dbReference type="Reactome" id="R-MMU-5358346">
    <property type="pathway name" value="Hedgehog ligand biogenesis"/>
</dbReference>
<dbReference type="Reactome" id="R-MMU-5607761">
    <property type="pathway name" value="Dectin-1 mediated noncanonical NF-kB signaling"/>
</dbReference>
<dbReference type="Reactome" id="R-MMU-5607764">
    <property type="pathway name" value="CLEC7A (Dectin-1) signaling"/>
</dbReference>
<dbReference type="Reactome" id="R-MMU-5610780">
    <property type="pathway name" value="Degradation of GLI1 by the proteasome"/>
</dbReference>
<dbReference type="Reactome" id="R-MMU-5610785">
    <property type="pathway name" value="GLI3 is processed to GLI3R by the proteasome"/>
</dbReference>
<dbReference type="Reactome" id="R-MMU-5632684">
    <property type="pathway name" value="Hedgehog 'on' state"/>
</dbReference>
<dbReference type="Reactome" id="R-MMU-5658442">
    <property type="pathway name" value="Regulation of RAS by GAPs"/>
</dbReference>
<dbReference type="Reactome" id="R-MMU-5668541">
    <property type="pathway name" value="TNFR2 non-canonical NF-kB pathway"/>
</dbReference>
<dbReference type="Reactome" id="R-MMU-5676590">
    <property type="pathway name" value="NIK--&gt;noncanonical NF-kB signaling"/>
</dbReference>
<dbReference type="Reactome" id="R-MMU-5687128">
    <property type="pathway name" value="MAPK6/MAPK4 signaling"/>
</dbReference>
<dbReference type="Reactome" id="R-MMU-5689603">
    <property type="pathway name" value="UCH proteinases"/>
</dbReference>
<dbReference type="Reactome" id="R-MMU-5689880">
    <property type="pathway name" value="Ub-specific processing proteases"/>
</dbReference>
<dbReference type="Reactome" id="R-MMU-68867">
    <property type="pathway name" value="Assembly of the pre-replicative complex"/>
</dbReference>
<dbReference type="Reactome" id="R-MMU-68949">
    <property type="pathway name" value="Orc1 removal from chromatin"/>
</dbReference>
<dbReference type="Reactome" id="R-MMU-69017">
    <property type="pathway name" value="CDK-mediated phosphorylation and removal of Cdc6"/>
</dbReference>
<dbReference type="Reactome" id="R-MMU-69481">
    <property type="pathway name" value="G2/M Checkpoints"/>
</dbReference>
<dbReference type="Reactome" id="R-MMU-69601">
    <property type="pathway name" value="Ubiquitin Mediated Degradation of Phosphorylated Cdc25A"/>
</dbReference>
<dbReference type="Reactome" id="R-MMU-75815">
    <property type="pathway name" value="Ubiquitin-dependent degradation of Cyclin D"/>
</dbReference>
<dbReference type="Reactome" id="R-MMU-8852276">
    <property type="pathway name" value="The role of GTSE1 in G2/M progression after G2 checkpoint"/>
</dbReference>
<dbReference type="Reactome" id="R-MMU-8854050">
    <property type="pathway name" value="FBXL7 down-regulates AURKA during mitotic entry and in early mitosis"/>
</dbReference>
<dbReference type="Reactome" id="R-MMU-8939236">
    <property type="pathway name" value="RUNX1 regulates transcription of genes involved in differentiation of HSCs"/>
</dbReference>
<dbReference type="Reactome" id="R-MMU-8939902">
    <property type="pathway name" value="Regulation of RUNX2 expression and activity"/>
</dbReference>
<dbReference type="Reactome" id="R-MMU-8941858">
    <property type="pathway name" value="Regulation of RUNX3 expression and activity"/>
</dbReference>
<dbReference type="Reactome" id="R-MMU-8948751">
    <property type="pathway name" value="Regulation of PTEN stability and activity"/>
</dbReference>
<dbReference type="Reactome" id="R-MMU-8951664">
    <property type="pathway name" value="Neddylation"/>
</dbReference>
<dbReference type="Reactome" id="R-MMU-9020702">
    <property type="pathway name" value="Interleukin-1 signaling"/>
</dbReference>
<dbReference type="Reactome" id="R-MMU-9755511">
    <property type="pathway name" value="KEAP1-NFE2L2 pathway"/>
</dbReference>
<dbReference type="Reactome" id="R-MMU-9762114">
    <property type="pathway name" value="GSK3B and BTRC:CUL1-mediated-degradation of NFE2L2"/>
</dbReference>
<dbReference type="Reactome" id="R-MMU-983168">
    <property type="pathway name" value="Antigen processing: Ubiquitination &amp; Proteasome degradation"/>
</dbReference>
<dbReference type="Reactome" id="R-MMU-9907900">
    <property type="pathway name" value="Proteasome assembly"/>
</dbReference>
<dbReference type="BioGRID-ORCS" id="19184">
    <property type="hits" value="25 hits in 77 CRISPR screens"/>
</dbReference>
<dbReference type="PRO" id="PR:P62196"/>
<dbReference type="Proteomes" id="UP000000589">
    <property type="component" value="Chromosome 11"/>
</dbReference>
<dbReference type="RNAct" id="P62196">
    <property type="molecule type" value="protein"/>
</dbReference>
<dbReference type="Bgee" id="ENSMUSG00000020708">
    <property type="expression patterns" value="Expressed in otic placode and 266 other cell types or tissues"/>
</dbReference>
<dbReference type="ExpressionAtlas" id="P62196">
    <property type="expression patterns" value="baseline and differential"/>
</dbReference>
<dbReference type="GO" id="GO:0005737">
    <property type="term" value="C:cytoplasm"/>
    <property type="evidence" value="ECO:0000250"/>
    <property type="project" value="UniProtKB"/>
</dbReference>
<dbReference type="GO" id="GO:0031410">
    <property type="term" value="C:cytoplasmic vesicle"/>
    <property type="evidence" value="ECO:0007669"/>
    <property type="project" value="Ensembl"/>
</dbReference>
<dbReference type="GO" id="GO:0031597">
    <property type="term" value="C:cytosolic proteasome complex"/>
    <property type="evidence" value="ECO:0007669"/>
    <property type="project" value="Ensembl"/>
</dbReference>
<dbReference type="GO" id="GO:0016234">
    <property type="term" value="C:inclusion body"/>
    <property type="evidence" value="ECO:0007669"/>
    <property type="project" value="Ensembl"/>
</dbReference>
<dbReference type="GO" id="GO:0031595">
    <property type="term" value="C:nuclear proteasome complex"/>
    <property type="evidence" value="ECO:0007669"/>
    <property type="project" value="Ensembl"/>
</dbReference>
<dbReference type="GO" id="GO:0005634">
    <property type="term" value="C:nucleus"/>
    <property type="evidence" value="ECO:0000250"/>
    <property type="project" value="UniProtKB"/>
</dbReference>
<dbReference type="GO" id="GO:0022624">
    <property type="term" value="C:proteasome accessory complex"/>
    <property type="evidence" value="ECO:0000314"/>
    <property type="project" value="UniProtKB"/>
</dbReference>
<dbReference type="GO" id="GO:0000502">
    <property type="term" value="C:proteasome complex"/>
    <property type="evidence" value="ECO:0000250"/>
    <property type="project" value="UniProtKB"/>
</dbReference>
<dbReference type="GO" id="GO:0005838">
    <property type="term" value="C:proteasome regulatory particle"/>
    <property type="evidence" value="ECO:0000314"/>
    <property type="project" value="MGI"/>
</dbReference>
<dbReference type="GO" id="GO:0005675">
    <property type="term" value="C:transcription factor TFIIH holo complex"/>
    <property type="evidence" value="ECO:0000266"/>
    <property type="project" value="MGI"/>
</dbReference>
<dbReference type="GO" id="GO:0005524">
    <property type="term" value="F:ATP binding"/>
    <property type="evidence" value="ECO:0007669"/>
    <property type="project" value="UniProtKB-KW"/>
</dbReference>
<dbReference type="GO" id="GO:0016887">
    <property type="term" value="F:ATP hydrolysis activity"/>
    <property type="evidence" value="ECO:0007669"/>
    <property type="project" value="Ensembl"/>
</dbReference>
<dbReference type="GO" id="GO:0140297">
    <property type="term" value="F:DNA-binding transcription factor binding"/>
    <property type="evidence" value="ECO:0007669"/>
    <property type="project" value="Ensembl"/>
</dbReference>
<dbReference type="GO" id="GO:0140296">
    <property type="term" value="F:general transcription initiation factor binding"/>
    <property type="evidence" value="ECO:0000250"/>
    <property type="project" value="UniProtKB"/>
</dbReference>
<dbReference type="GO" id="GO:0005102">
    <property type="term" value="F:signaling receptor binding"/>
    <property type="evidence" value="ECO:0000353"/>
    <property type="project" value="UniProtKB"/>
</dbReference>
<dbReference type="GO" id="GO:0017025">
    <property type="term" value="F:TBP-class protein binding"/>
    <property type="evidence" value="ECO:0007669"/>
    <property type="project" value="Ensembl"/>
</dbReference>
<dbReference type="GO" id="GO:0031531">
    <property type="term" value="F:thyrotropin-releasing hormone receptor binding"/>
    <property type="evidence" value="ECO:0000250"/>
    <property type="project" value="UniProtKB"/>
</dbReference>
<dbReference type="GO" id="GO:0045892">
    <property type="term" value="P:negative regulation of DNA-templated transcription"/>
    <property type="evidence" value="ECO:0000314"/>
    <property type="project" value="MGI"/>
</dbReference>
<dbReference type="GO" id="GO:0090261">
    <property type="term" value="P:positive regulation of inclusion body assembly"/>
    <property type="evidence" value="ECO:0007669"/>
    <property type="project" value="Ensembl"/>
</dbReference>
<dbReference type="GO" id="GO:0043161">
    <property type="term" value="P:proteasome-mediated ubiquitin-dependent protein catabolic process"/>
    <property type="evidence" value="ECO:0000250"/>
    <property type="project" value="UniProtKB"/>
</dbReference>
<dbReference type="GO" id="GO:0006357">
    <property type="term" value="P:regulation of transcription by RNA polymerase II"/>
    <property type="evidence" value="ECO:0007669"/>
    <property type="project" value="Ensembl"/>
</dbReference>
<dbReference type="CDD" id="cd19502">
    <property type="entry name" value="RecA-like_PAN_like"/>
    <property type="match status" value="1"/>
</dbReference>
<dbReference type="FunFam" id="1.10.8.60:FF:000006">
    <property type="entry name" value="26S protease regulatory subunit 8"/>
    <property type="match status" value="1"/>
</dbReference>
<dbReference type="FunFam" id="2.40.50.140:FF:000044">
    <property type="entry name" value="26S protease regulatory subunit 8"/>
    <property type="match status" value="1"/>
</dbReference>
<dbReference type="FunFam" id="3.40.50.300:FF:000030">
    <property type="entry name" value="26S protease regulatory subunit 8"/>
    <property type="match status" value="1"/>
</dbReference>
<dbReference type="Gene3D" id="1.10.8.60">
    <property type="match status" value="1"/>
</dbReference>
<dbReference type="Gene3D" id="2.40.50.140">
    <property type="entry name" value="Nucleic acid-binding proteins"/>
    <property type="match status" value="1"/>
</dbReference>
<dbReference type="Gene3D" id="3.40.50.300">
    <property type="entry name" value="P-loop containing nucleotide triphosphate hydrolases"/>
    <property type="match status" value="1"/>
</dbReference>
<dbReference type="InterPro" id="IPR050221">
    <property type="entry name" value="26S_Proteasome_ATPase"/>
</dbReference>
<dbReference type="InterPro" id="IPR003593">
    <property type="entry name" value="AAA+_ATPase"/>
</dbReference>
<dbReference type="InterPro" id="IPR041569">
    <property type="entry name" value="AAA_lid_3"/>
</dbReference>
<dbReference type="InterPro" id="IPR003959">
    <property type="entry name" value="ATPase_AAA_core"/>
</dbReference>
<dbReference type="InterPro" id="IPR003960">
    <property type="entry name" value="ATPase_AAA_CS"/>
</dbReference>
<dbReference type="InterPro" id="IPR012340">
    <property type="entry name" value="NA-bd_OB-fold"/>
</dbReference>
<dbReference type="InterPro" id="IPR027417">
    <property type="entry name" value="P-loop_NTPase"/>
</dbReference>
<dbReference type="InterPro" id="IPR032501">
    <property type="entry name" value="Prot_ATP_ID_OB_2nd"/>
</dbReference>
<dbReference type="PANTHER" id="PTHR23073">
    <property type="entry name" value="26S PROTEASOME REGULATORY SUBUNIT"/>
    <property type="match status" value="1"/>
</dbReference>
<dbReference type="Pfam" id="PF00004">
    <property type="entry name" value="AAA"/>
    <property type="match status" value="1"/>
</dbReference>
<dbReference type="Pfam" id="PF17862">
    <property type="entry name" value="AAA_lid_3"/>
    <property type="match status" value="1"/>
</dbReference>
<dbReference type="Pfam" id="PF16450">
    <property type="entry name" value="Prot_ATP_ID_OB_C"/>
    <property type="match status" value="1"/>
</dbReference>
<dbReference type="SMART" id="SM00382">
    <property type="entry name" value="AAA"/>
    <property type="match status" value="1"/>
</dbReference>
<dbReference type="SUPFAM" id="SSF52540">
    <property type="entry name" value="P-loop containing nucleoside triphosphate hydrolases"/>
    <property type="match status" value="1"/>
</dbReference>
<dbReference type="PROSITE" id="PS00674">
    <property type="entry name" value="AAA"/>
    <property type="match status" value="1"/>
</dbReference>
<name>PRS8_MOUSE</name>
<gene>
    <name type="primary">Psmc5</name>
    <name type="synonym">Sug1</name>
</gene>
<keyword id="KW-0007">Acetylation</keyword>
<keyword id="KW-0067">ATP-binding</keyword>
<keyword id="KW-0963">Cytoplasm</keyword>
<keyword id="KW-0547">Nucleotide-binding</keyword>
<keyword id="KW-0539">Nucleus</keyword>
<keyword id="KW-0597">Phosphoprotein</keyword>
<keyword id="KW-0647">Proteasome</keyword>
<keyword id="KW-1185">Reference proteome</keyword>
<protein>
    <recommendedName>
        <fullName>26S proteasome regulatory subunit 8</fullName>
    </recommendedName>
    <alternativeName>
        <fullName>26S proteasome AAA-ATPase subunit RPT6</fullName>
    </alternativeName>
    <alternativeName>
        <fullName>Proteasome 26S subunit ATPase 5</fullName>
    </alternativeName>
    <alternativeName>
        <fullName>Proteasome subunit p45</fullName>
    </alternativeName>
    <alternativeName>
        <fullName>p45/SUG</fullName>
        <shortName>mSUG1</shortName>
    </alternativeName>
</protein>
<organism>
    <name type="scientific">Mus musculus</name>
    <name type="common">Mouse</name>
    <dbReference type="NCBI Taxonomy" id="10090"/>
    <lineage>
        <taxon>Eukaryota</taxon>
        <taxon>Metazoa</taxon>
        <taxon>Chordata</taxon>
        <taxon>Craniata</taxon>
        <taxon>Vertebrata</taxon>
        <taxon>Euteleostomi</taxon>
        <taxon>Mammalia</taxon>
        <taxon>Eutheria</taxon>
        <taxon>Euarchontoglires</taxon>
        <taxon>Glires</taxon>
        <taxon>Rodentia</taxon>
        <taxon>Myomorpha</taxon>
        <taxon>Muroidea</taxon>
        <taxon>Muridae</taxon>
        <taxon>Murinae</taxon>
        <taxon>Mus</taxon>
        <taxon>Mus</taxon>
    </lineage>
</organism>
<reference key="1">
    <citation type="journal article" date="1996" name="EMBO J.">
        <title>Differential ligand-dependent interactions between the AF-2 activating domain of nuclear receptors and the putative transcriptional intermediary factors mSUG1 and TIF1.</title>
        <authorList>
            <person name="Vom Baur E."/>
            <person name="Zechel C."/>
            <person name="Heery D."/>
            <person name="Heine M.J."/>
            <person name="Garnier J.-M."/>
            <person name="Vivat V."/>
            <person name="le Douarin B."/>
            <person name="Gronemeyer H."/>
            <person name="Chambon P."/>
            <person name="Losson R."/>
        </authorList>
    </citation>
    <scope>NUCLEOTIDE SEQUENCE [MRNA]</scope>
    <scope>INTERACTION WITH NUCLEAR RECEPTORS</scope>
</reference>
<reference key="2">
    <citation type="journal article" date="2005" name="Science">
        <title>The transcriptional landscape of the mammalian genome.</title>
        <authorList>
            <person name="Carninci P."/>
            <person name="Kasukawa T."/>
            <person name="Katayama S."/>
            <person name="Gough J."/>
            <person name="Frith M.C."/>
            <person name="Maeda N."/>
            <person name="Oyama R."/>
            <person name="Ravasi T."/>
            <person name="Lenhard B."/>
            <person name="Wells C."/>
            <person name="Kodzius R."/>
            <person name="Shimokawa K."/>
            <person name="Bajic V.B."/>
            <person name="Brenner S.E."/>
            <person name="Batalov S."/>
            <person name="Forrest A.R."/>
            <person name="Zavolan M."/>
            <person name="Davis M.J."/>
            <person name="Wilming L.G."/>
            <person name="Aidinis V."/>
            <person name="Allen J.E."/>
            <person name="Ambesi-Impiombato A."/>
            <person name="Apweiler R."/>
            <person name="Aturaliya R.N."/>
            <person name="Bailey T.L."/>
            <person name="Bansal M."/>
            <person name="Baxter L."/>
            <person name="Beisel K.W."/>
            <person name="Bersano T."/>
            <person name="Bono H."/>
            <person name="Chalk A.M."/>
            <person name="Chiu K.P."/>
            <person name="Choudhary V."/>
            <person name="Christoffels A."/>
            <person name="Clutterbuck D.R."/>
            <person name="Crowe M.L."/>
            <person name="Dalla E."/>
            <person name="Dalrymple B.P."/>
            <person name="de Bono B."/>
            <person name="Della Gatta G."/>
            <person name="di Bernardo D."/>
            <person name="Down T."/>
            <person name="Engstrom P."/>
            <person name="Fagiolini M."/>
            <person name="Faulkner G."/>
            <person name="Fletcher C.F."/>
            <person name="Fukushima T."/>
            <person name="Furuno M."/>
            <person name="Futaki S."/>
            <person name="Gariboldi M."/>
            <person name="Georgii-Hemming P."/>
            <person name="Gingeras T.R."/>
            <person name="Gojobori T."/>
            <person name="Green R.E."/>
            <person name="Gustincich S."/>
            <person name="Harbers M."/>
            <person name="Hayashi Y."/>
            <person name="Hensch T.K."/>
            <person name="Hirokawa N."/>
            <person name="Hill D."/>
            <person name="Huminiecki L."/>
            <person name="Iacono M."/>
            <person name="Ikeo K."/>
            <person name="Iwama A."/>
            <person name="Ishikawa T."/>
            <person name="Jakt M."/>
            <person name="Kanapin A."/>
            <person name="Katoh M."/>
            <person name="Kawasawa Y."/>
            <person name="Kelso J."/>
            <person name="Kitamura H."/>
            <person name="Kitano H."/>
            <person name="Kollias G."/>
            <person name="Krishnan S.P."/>
            <person name="Kruger A."/>
            <person name="Kummerfeld S.K."/>
            <person name="Kurochkin I.V."/>
            <person name="Lareau L.F."/>
            <person name="Lazarevic D."/>
            <person name="Lipovich L."/>
            <person name="Liu J."/>
            <person name="Liuni S."/>
            <person name="McWilliam S."/>
            <person name="Madan Babu M."/>
            <person name="Madera M."/>
            <person name="Marchionni L."/>
            <person name="Matsuda H."/>
            <person name="Matsuzawa S."/>
            <person name="Miki H."/>
            <person name="Mignone F."/>
            <person name="Miyake S."/>
            <person name="Morris K."/>
            <person name="Mottagui-Tabar S."/>
            <person name="Mulder N."/>
            <person name="Nakano N."/>
            <person name="Nakauchi H."/>
            <person name="Ng P."/>
            <person name="Nilsson R."/>
            <person name="Nishiguchi S."/>
            <person name="Nishikawa S."/>
            <person name="Nori F."/>
            <person name="Ohara O."/>
            <person name="Okazaki Y."/>
            <person name="Orlando V."/>
            <person name="Pang K.C."/>
            <person name="Pavan W.J."/>
            <person name="Pavesi G."/>
            <person name="Pesole G."/>
            <person name="Petrovsky N."/>
            <person name="Piazza S."/>
            <person name="Reed J."/>
            <person name="Reid J.F."/>
            <person name="Ring B.Z."/>
            <person name="Ringwald M."/>
            <person name="Rost B."/>
            <person name="Ruan Y."/>
            <person name="Salzberg S.L."/>
            <person name="Sandelin A."/>
            <person name="Schneider C."/>
            <person name="Schoenbach C."/>
            <person name="Sekiguchi K."/>
            <person name="Semple C.A."/>
            <person name="Seno S."/>
            <person name="Sessa L."/>
            <person name="Sheng Y."/>
            <person name="Shibata Y."/>
            <person name="Shimada H."/>
            <person name="Shimada K."/>
            <person name="Silva D."/>
            <person name="Sinclair B."/>
            <person name="Sperling S."/>
            <person name="Stupka E."/>
            <person name="Sugiura K."/>
            <person name="Sultana R."/>
            <person name="Takenaka Y."/>
            <person name="Taki K."/>
            <person name="Tammoja K."/>
            <person name="Tan S.L."/>
            <person name="Tang S."/>
            <person name="Taylor M.S."/>
            <person name="Tegner J."/>
            <person name="Teichmann S.A."/>
            <person name="Ueda H.R."/>
            <person name="van Nimwegen E."/>
            <person name="Verardo R."/>
            <person name="Wei C.L."/>
            <person name="Yagi K."/>
            <person name="Yamanishi H."/>
            <person name="Zabarovsky E."/>
            <person name="Zhu S."/>
            <person name="Zimmer A."/>
            <person name="Hide W."/>
            <person name="Bult C."/>
            <person name="Grimmond S.M."/>
            <person name="Teasdale R.D."/>
            <person name="Liu E.T."/>
            <person name="Brusic V."/>
            <person name="Quackenbush J."/>
            <person name="Wahlestedt C."/>
            <person name="Mattick J.S."/>
            <person name="Hume D.A."/>
            <person name="Kai C."/>
            <person name="Sasaki D."/>
            <person name="Tomaru Y."/>
            <person name="Fukuda S."/>
            <person name="Kanamori-Katayama M."/>
            <person name="Suzuki M."/>
            <person name="Aoki J."/>
            <person name="Arakawa T."/>
            <person name="Iida J."/>
            <person name="Imamura K."/>
            <person name="Itoh M."/>
            <person name="Kato T."/>
            <person name="Kawaji H."/>
            <person name="Kawagashira N."/>
            <person name="Kawashima T."/>
            <person name="Kojima M."/>
            <person name="Kondo S."/>
            <person name="Konno H."/>
            <person name="Nakano K."/>
            <person name="Ninomiya N."/>
            <person name="Nishio T."/>
            <person name="Okada M."/>
            <person name="Plessy C."/>
            <person name="Shibata K."/>
            <person name="Shiraki T."/>
            <person name="Suzuki S."/>
            <person name="Tagami M."/>
            <person name="Waki K."/>
            <person name="Watahiki A."/>
            <person name="Okamura-Oho Y."/>
            <person name="Suzuki H."/>
            <person name="Kawai J."/>
            <person name="Hayashizaki Y."/>
        </authorList>
    </citation>
    <scope>NUCLEOTIDE SEQUENCE [LARGE SCALE MRNA]</scope>
    <source>
        <strain>C57BL/6J</strain>
        <tissue>Embryonic stem cell</tissue>
        <tissue>Muellerian duct</tissue>
    </source>
</reference>
<reference key="3">
    <citation type="journal article" date="2006" name="Circ. Res.">
        <title>Mapping the murine cardiac 26S proteasome complexes.</title>
        <authorList>
            <person name="Gomes A.V."/>
            <person name="Zong C."/>
            <person name="Edmondson R.D."/>
            <person name="Li X."/>
            <person name="Stefani E."/>
            <person name="Zhang J."/>
            <person name="Jones R.C."/>
            <person name="Thyparambil S."/>
            <person name="Wang G.W."/>
            <person name="Qiao X."/>
            <person name="Bardag-Gorce F."/>
            <person name="Ping P."/>
        </authorList>
    </citation>
    <scope>IDENTIFICATION IN THE 19S PROTEASOME REGULATORY COMPLEX</scope>
    <scope>ACETYLATION AT ALA-2</scope>
</reference>
<reference key="4">
    <citation type="journal article" date="2007" name="Biochem. Biophys. Res. Commun.">
        <title>Mouse homologue of yeast Prp19 interacts with mouse SUG1, the regulatory subunit of 26S proteasome.</title>
        <authorList>
            <person name="Sihn C.R."/>
            <person name="Cho S.Y."/>
            <person name="Lee J.H."/>
            <person name="Lee T.R."/>
            <person name="Kim S.H."/>
        </authorList>
    </citation>
    <scope>INTERACTION WITH PRPF19</scope>
</reference>
<reference key="5">
    <citation type="journal article" date="2010" name="Cell">
        <title>A tissue-specific atlas of mouse protein phosphorylation and expression.</title>
        <authorList>
            <person name="Huttlin E.L."/>
            <person name="Jedrychowski M.P."/>
            <person name="Elias J.E."/>
            <person name="Goswami T."/>
            <person name="Rad R."/>
            <person name="Beausoleil S.A."/>
            <person name="Villen J."/>
            <person name="Haas W."/>
            <person name="Sowa M.E."/>
            <person name="Gygi S.P."/>
        </authorList>
    </citation>
    <scope>IDENTIFICATION BY MASS SPECTROMETRY [LARGE SCALE ANALYSIS]</scope>
    <source>
        <tissue>Brain</tissue>
        <tissue>Brown adipose tissue</tissue>
        <tissue>Heart</tissue>
        <tissue>Kidney</tissue>
        <tissue>Liver</tissue>
        <tissue>Lung</tissue>
        <tissue>Pancreas</tissue>
        <tissue>Spleen</tissue>
        <tissue>Testis</tissue>
    </source>
</reference>
<sequence>MALDGPEQMELEEGKAGSGLRQYYLSKIEELQLIVNDKSQNLRRLQAQRNELNAKVRLLREELQLLQEQGSYVGEVVRAMDKKKVLVKVHPEGKFVVDVDKNIDINDVTPNCRVALRNDSYTLHKILPNKVDPLVSLMMVEKVPDSTYEMIGGLDKQIKEIKEVIELPVKHPELFEALGIAQPKGVLLYGPPGTGKTLLARAVAHHTDCTFIRVSGSELVQKFIGEGARMVRELFVMAREHAPSIIFMDEIDSIGSSRLEGGSGGDSEVQRTMLELLNQLDGFEATKNIKVIMATNRIDILDSALLRPGRIDRKIEFPPPNEEARLDILKIHSRKMNLTRGINLRKIAELMPGASGAEVKGVCTEAGMYALRERRVHVTQEDFEMAVAKVMQKDSEKNMSIKKLWK</sequence>
<feature type="initiator methionine" description="Removed" evidence="7">
    <location>
        <position position="1"/>
    </location>
</feature>
<feature type="chain" id="PRO_0000084722" description="26S proteasome regulatory subunit 8">
    <location>
        <begin position="2"/>
        <end position="406"/>
    </location>
</feature>
<feature type="region of interest" description="May mediate interaction with PRPF9" evidence="4">
    <location>
        <begin position="186"/>
        <end position="406"/>
    </location>
</feature>
<feature type="binding site" evidence="2">
    <location>
        <begin position="190"/>
        <end position="197"/>
    </location>
    <ligand>
        <name>ATP</name>
        <dbReference type="ChEBI" id="CHEBI:30616"/>
    </ligand>
</feature>
<feature type="modified residue" description="N-acetylalanine" evidence="3">
    <location>
        <position position="2"/>
    </location>
</feature>
<feature type="modified residue" description="Phosphoserine" evidence="1">
    <location>
        <position position="120"/>
    </location>
</feature>
<feature type="modified residue" description="N6-acetyllysine" evidence="1">
    <location>
        <position position="222"/>
    </location>
</feature>
<feature type="sequence conflict" description="In Ref. 2; BAB26990." evidence="6" ref="2">
    <original>R</original>
    <variation>G</variation>
    <location>
        <position position="375"/>
    </location>
</feature>